<sequence>MGRAFEYRKATKLKRWGHMAKTFTRLGKQIAIAVKAGGPEPENNPTLRGVIATCKRENMPKDNIERAIKNAMGKDTSDYKGMTYEGYGPHGVAVFVDTLTDNTTRTVADVRSVFNKFGGNLGTTGSLAFLFDHKCVFTFKKKEGMDMEELILDLIDYNVEDEFDEDEEEGTITIYGDPKSYAAIQKHLEECGFEEVGGDFTYIPNDLKDVTPEQRETLDKMVERLEEFDDVQTVYTNMKPASEEEE</sequence>
<keyword id="KW-0963">Cytoplasm</keyword>
<keyword id="KW-0238">DNA-binding</keyword>
<keyword id="KW-0804">Transcription</keyword>
<keyword id="KW-0805">Transcription regulation</keyword>
<protein>
    <recommendedName>
        <fullName evidence="1">Probable transcriptional regulatory protein BVU_3469</fullName>
    </recommendedName>
</protein>
<proteinExistence type="inferred from homology"/>
<dbReference type="EMBL" id="CP000139">
    <property type="protein sequence ID" value="ABR41093.1"/>
    <property type="molecule type" value="Genomic_DNA"/>
</dbReference>
<dbReference type="RefSeq" id="WP_005839937.1">
    <property type="nucleotide sequence ID" value="NZ_JANSWM010000114.1"/>
</dbReference>
<dbReference type="SMR" id="A6L5X9"/>
<dbReference type="STRING" id="435590.BVU_3469"/>
<dbReference type="PaxDb" id="435590-BVU_3469"/>
<dbReference type="KEGG" id="bvu:BVU_3469"/>
<dbReference type="eggNOG" id="COG0217">
    <property type="taxonomic scope" value="Bacteria"/>
</dbReference>
<dbReference type="HOGENOM" id="CLU_062974_3_0_10"/>
<dbReference type="BioCyc" id="BVUL435590:G1G59-3596-MONOMER"/>
<dbReference type="Proteomes" id="UP000002861">
    <property type="component" value="Chromosome"/>
</dbReference>
<dbReference type="GO" id="GO:0005829">
    <property type="term" value="C:cytosol"/>
    <property type="evidence" value="ECO:0007669"/>
    <property type="project" value="TreeGrafter"/>
</dbReference>
<dbReference type="GO" id="GO:0003677">
    <property type="term" value="F:DNA binding"/>
    <property type="evidence" value="ECO:0007669"/>
    <property type="project" value="UniProtKB-UniRule"/>
</dbReference>
<dbReference type="GO" id="GO:0006355">
    <property type="term" value="P:regulation of DNA-templated transcription"/>
    <property type="evidence" value="ECO:0007669"/>
    <property type="project" value="UniProtKB-UniRule"/>
</dbReference>
<dbReference type="FunFam" id="1.10.10.200:FF:000004">
    <property type="entry name" value="Probable transcriptional regulatory protein BSBG_02618"/>
    <property type="match status" value="1"/>
</dbReference>
<dbReference type="Gene3D" id="1.10.10.200">
    <property type="match status" value="1"/>
</dbReference>
<dbReference type="Gene3D" id="3.30.70.980">
    <property type="match status" value="2"/>
</dbReference>
<dbReference type="HAMAP" id="MF_00693">
    <property type="entry name" value="Transcrip_reg_TACO1"/>
    <property type="match status" value="1"/>
</dbReference>
<dbReference type="InterPro" id="IPR017856">
    <property type="entry name" value="Integrase-like_N"/>
</dbReference>
<dbReference type="InterPro" id="IPR048300">
    <property type="entry name" value="TACO1_YebC-like_2nd/3rd_dom"/>
</dbReference>
<dbReference type="InterPro" id="IPR049083">
    <property type="entry name" value="TACO1_YebC_N"/>
</dbReference>
<dbReference type="InterPro" id="IPR002876">
    <property type="entry name" value="Transcrip_reg_TACO1-like"/>
</dbReference>
<dbReference type="InterPro" id="IPR026564">
    <property type="entry name" value="Transcrip_reg_TACO1-like_dom3"/>
</dbReference>
<dbReference type="InterPro" id="IPR029072">
    <property type="entry name" value="YebC-like"/>
</dbReference>
<dbReference type="NCBIfam" id="NF009044">
    <property type="entry name" value="PRK12378.1"/>
    <property type="match status" value="1"/>
</dbReference>
<dbReference type="NCBIfam" id="TIGR01033">
    <property type="entry name" value="YebC/PmpR family DNA-binding transcriptional regulator"/>
    <property type="match status" value="1"/>
</dbReference>
<dbReference type="PANTHER" id="PTHR12532:SF6">
    <property type="entry name" value="TRANSCRIPTIONAL REGULATORY PROTEIN YEBC-RELATED"/>
    <property type="match status" value="1"/>
</dbReference>
<dbReference type="PANTHER" id="PTHR12532">
    <property type="entry name" value="TRANSLATIONAL ACTIVATOR OF CYTOCHROME C OXIDASE 1"/>
    <property type="match status" value="1"/>
</dbReference>
<dbReference type="Pfam" id="PF20772">
    <property type="entry name" value="TACO1_YebC_N"/>
    <property type="match status" value="1"/>
</dbReference>
<dbReference type="Pfam" id="PF01709">
    <property type="entry name" value="Transcrip_reg"/>
    <property type="match status" value="1"/>
</dbReference>
<dbReference type="SUPFAM" id="SSF75625">
    <property type="entry name" value="YebC-like"/>
    <property type="match status" value="1"/>
</dbReference>
<comment type="subcellular location">
    <subcellularLocation>
        <location evidence="1">Cytoplasm</location>
    </subcellularLocation>
</comment>
<comment type="similarity">
    <text evidence="1">Belongs to the TACO1 family.</text>
</comment>
<reference key="1">
    <citation type="journal article" date="2007" name="PLoS Biol.">
        <title>Evolution of symbiotic bacteria in the distal human intestine.</title>
        <authorList>
            <person name="Xu J."/>
            <person name="Mahowald M.A."/>
            <person name="Ley R.E."/>
            <person name="Lozupone C.A."/>
            <person name="Hamady M."/>
            <person name="Martens E.C."/>
            <person name="Henrissat B."/>
            <person name="Coutinho P.M."/>
            <person name="Minx P."/>
            <person name="Latreille P."/>
            <person name="Cordum H."/>
            <person name="Van Brunt A."/>
            <person name="Kim K."/>
            <person name="Fulton R.S."/>
            <person name="Fulton L.A."/>
            <person name="Clifton S.W."/>
            <person name="Wilson R.K."/>
            <person name="Knight R.D."/>
            <person name="Gordon J.I."/>
        </authorList>
    </citation>
    <scope>NUCLEOTIDE SEQUENCE [LARGE SCALE GENOMIC DNA]</scope>
    <source>
        <strain>ATCC 8482 / DSM 1447 / JCM 5826 / CCUG 4940 / NBRC 14291 / NCTC 11154</strain>
    </source>
</reference>
<gene>
    <name type="ordered locus">BVU_3469</name>
</gene>
<feature type="chain" id="PRO_1000045274" description="Probable transcriptional regulatory protein BVU_3469">
    <location>
        <begin position="1"/>
        <end position="246"/>
    </location>
</feature>
<accession>A6L5X9</accession>
<name>Y3469_PHOV8</name>
<organism>
    <name type="scientific">Phocaeicola vulgatus (strain ATCC 8482 / DSM 1447 / JCM 5826 / CCUG 4940 / NBRC 14291 / NCTC 11154)</name>
    <name type="common">Bacteroides vulgatus</name>
    <dbReference type="NCBI Taxonomy" id="435590"/>
    <lineage>
        <taxon>Bacteria</taxon>
        <taxon>Pseudomonadati</taxon>
        <taxon>Bacteroidota</taxon>
        <taxon>Bacteroidia</taxon>
        <taxon>Bacteroidales</taxon>
        <taxon>Bacteroidaceae</taxon>
        <taxon>Phocaeicola</taxon>
    </lineage>
</organism>
<evidence type="ECO:0000255" key="1">
    <source>
        <dbReference type="HAMAP-Rule" id="MF_00693"/>
    </source>
</evidence>